<feature type="chain" id="PRO_0000205571" description="Tryptophan 5-hydroxylase 1">
    <location>
        <begin position="1"/>
        <end position="444"/>
    </location>
</feature>
<feature type="domain" description="ACT" evidence="5">
    <location>
        <begin position="19"/>
        <end position="94"/>
    </location>
</feature>
<feature type="binding site" evidence="3">
    <location>
        <position position="235"/>
    </location>
    <ligand>
        <name>L-tryptophan</name>
        <dbReference type="ChEBI" id="CHEBI:57912"/>
    </ligand>
</feature>
<feature type="binding site" evidence="3">
    <location>
        <position position="257"/>
    </location>
    <ligand>
        <name>L-tryptophan</name>
        <dbReference type="ChEBI" id="CHEBI:57912"/>
    </ligand>
</feature>
<feature type="binding site" evidence="3">
    <location>
        <position position="265"/>
    </location>
    <ligand>
        <name>L-tryptophan</name>
        <dbReference type="ChEBI" id="CHEBI:57912"/>
    </ligand>
</feature>
<feature type="binding site" evidence="3">
    <location>
        <position position="272"/>
    </location>
    <ligand>
        <name>Fe cation</name>
        <dbReference type="ChEBI" id="CHEBI:24875"/>
    </ligand>
</feature>
<feature type="binding site" evidence="3">
    <location>
        <position position="277"/>
    </location>
    <ligand>
        <name>Fe cation</name>
        <dbReference type="ChEBI" id="CHEBI:24875"/>
    </ligand>
</feature>
<feature type="binding site" evidence="3">
    <location>
        <position position="317"/>
    </location>
    <ligand>
        <name>Fe cation</name>
        <dbReference type="ChEBI" id="CHEBI:24875"/>
    </ligand>
</feature>
<feature type="binding site" evidence="3">
    <location>
        <position position="336"/>
    </location>
    <ligand>
        <name>L-tryptophan</name>
        <dbReference type="ChEBI" id="CHEBI:57912"/>
    </ligand>
</feature>
<feature type="binding site" evidence="3">
    <location>
        <position position="366"/>
    </location>
    <ligand>
        <name>L-tryptophan</name>
        <dbReference type="ChEBI" id="CHEBI:57912"/>
    </ligand>
</feature>
<feature type="modified residue" description="Phosphoserine; by PKA" evidence="4">
    <location>
        <position position="58"/>
    </location>
</feature>
<reference key="1">
    <citation type="journal article" date="1988" name="J. Neurochem.">
        <title>Sequence of two mRNAs encoding active rat tryptophan hydroxylase.</title>
        <authorList>
            <person name="Darmon M.C."/>
            <person name="Guibert B."/>
            <person name="Leviel V."/>
            <person name="Ehret M."/>
            <person name="Maitre M."/>
            <person name="Mallet J."/>
        </authorList>
    </citation>
    <scope>NUCLEOTIDE SEQUENCE [MRNA]</scope>
    <source>
        <strain>Wistar</strain>
        <tissue>Pineal gland</tissue>
    </source>
</reference>
<reference key="2">
    <citation type="journal article" date="1991" name="Brain Res. Mol. Brain Res.">
        <title>Molecular cloning and characterization of cDNA encoding tryptophan hydroxylase from rat central serotonergic neurons.</title>
        <authorList>
            <person name="Kim K.S."/>
            <person name="Wessel T.C."/>
            <person name="Stone D.M."/>
            <person name="Carver C.H."/>
            <person name="Joh T.H."/>
            <person name="Park D.H."/>
        </authorList>
    </citation>
    <scope>NUCLEOTIDE SEQUENCE [MRNA]</scope>
</reference>
<reference key="3">
    <citation type="journal article" date="1986" name="FEBS Lett.">
        <title>Isolation of a rat pineal gland cDNA clone homologous to tyrosine and phenylalanine hydroxylases.</title>
        <authorList>
            <person name="Darmon M.C."/>
            <person name="Grima B."/>
            <person name="Cash C.D."/>
            <person name="Maitre M."/>
            <person name="Mallet J."/>
        </authorList>
    </citation>
    <scope>NUCLEOTIDE SEQUENCE [MRNA] OF 167-261</scope>
</reference>
<reference key="4">
    <citation type="journal article" date="2002" name="Eur. J. Biochem.">
        <title>Proteasome-driven turnover of tryptophan hydroxylase is triggered by phosphorylation in RBL2H3 cells, a serotonin producing mast cell line.</title>
        <authorList>
            <person name="Iida Y."/>
            <person name="Sawabe K."/>
            <person name="Kojima M."/>
            <person name="Oguro K."/>
            <person name="Nakanishi N."/>
            <person name="Hasegawa H."/>
        </authorList>
    </citation>
    <scope>FUNCTION</scope>
    <scope>CATALYTIC ACTIVITY</scope>
</reference>
<gene>
    <name type="primary">Tph1</name>
    <name type="synonym">Tph</name>
</gene>
<protein>
    <recommendedName>
        <fullName>Tryptophan 5-hydroxylase 1</fullName>
        <ecNumber evidence="6">1.14.16.4</ecNumber>
    </recommendedName>
    <alternativeName>
        <fullName>Tryptophan 5-monooxygenase 1</fullName>
    </alternativeName>
</protein>
<organism>
    <name type="scientific">Rattus norvegicus</name>
    <name type="common">Rat</name>
    <dbReference type="NCBI Taxonomy" id="10116"/>
    <lineage>
        <taxon>Eukaryota</taxon>
        <taxon>Metazoa</taxon>
        <taxon>Chordata</taxon>
        <taxon>Craniata</taxon>
        <taxon>Vertebrata</taxon>
        <taxon>Euteleostomi</taxon>
        <taxon>Mammalia</taxon>
        <taxon>Eutheria</taxon>
        <taxon>Euarchontoglires</taxon>
        <taxon>Glires</taxon>
        <taxon>Rodentia</taxon>
        <taxon>Myomorpha</taxon>
        <taxon>Muroidea</taxon>
        <taxon>Muridae</taxon>
        <taxon>Murinae</taxon>
        <taxon>Rattus</taxon>
    </lineage>
</organism>
<comment type="function">
    <text evidence="6">Oxidizes L-tryptophan to 5-hydroxy-l-tryptophan in the rate-determining step of serotonin biosynthesis.</text>
</comment>
<comment type="catalytic activity">
    <reaction evidence="6">
        <text>(6R)-L-erythro-5,6,7,8-tetrahydrobiopterin + L-tryptophan + O2 = 5-hydroxy-L-tryptophan + (4aS,6R)-4a-hydroxy-L-erythro-5,6,7,8-tetrahydrobiopterin</text>
        <dbReference type="Rhea" id="RHEA:16709"/>
        <dbReference type="ChEBI" id="CHEBI:15379"/>
        <dbReference type="ChEBI" id="CHEBI:15642"/>
        <dbReference type="ChEBI" id="CHEBI:57912"/>
        <dbReference type="ChEBI" id="CHEBI:58266"/>
        <dbReference type="ChEBI" id="CHEBI:59560"/>
        <dbReference type="EC" id="1.14.16.4"/>
    </reaction>
</comment>
<comment type="cofactor">
    <cofactor evidence="2">
        <name>Fe(2+)</name>
        <dbReference type="ChEBI" id="CHEBI:29033"/>
    </cofactor>
</comment>
<comment type="pathway">
    <text evidence="6">Aromatic compound metabolism; serotonin biosynthesis; serotonin from L-tryptophan: step 1/2.</text>
</comment>
<comment type="subunit">
    <text evidence="1 3">Homotetramer (By similarity). Interacts with DNAJC12 (By similarity).</text>
</comment>
<comment type="PTM">
    <text evidence="6">Ubiquitinated, leading to its degradation by the proteasome. Ubiquitinated is triggered by phosphorylation.</text>
</comment>
<comment type="PTM">
    <text evidence="6">Phosphorylated; triggering degradation by the proteasome.</text>
</comment>
<comment type="similarity">
    <text evidence="7">Belongs to the biopterin-dependent aromatic amino acid hydroxylase family.</text>
</comment>
<sequence>MIEDNKENKDHSSERGRVTLIFSLKNEVGGLIKALKIFQENHVNLLHIESRKSKRRNSEFEIFVDCDINREQLNDIFPLLKSHTTVLSVDSPDQLPEKEDVMETVPWFPKKISDLDFCANRVLLYGSELDADHPGFKDNVYRRRRKYFAELAMNYKHGDPIPKIEFTEEEIKTWGTIFRELNKLYPTHACREYLRNLPLLSKYCGYREDNVPQLEDVSNFLKERTGFSIRPVAGYLSPRDFLSGLAFRVFHCTQYVRHSSDPLYTPEPDTCHELLGHVPLLAEPSFAQFSQEIGLASLGASEETVQKLATCYFFTVEFGLCKQDGQLRVFGAGLLSSISELRHALSGHAKVKPFDPKVACKQECLITSFQDVYFVSESFEDAKEKMREFAKTVKRPFGVKYNPYTQSIQVLRDSKSITSAMNELRHDLDVVNDALARVSRWPSV</sequence>
<evidence type="ECO:0000250" key="1">
    <source>
        <dbReference type="UniProtKB" id="P17532"/>
    </source>
</evidence>
<evidence type="ECO:0000250" key="2">
    <source>
        <dbReference type="UniProtKB" id="P17752"/>
    </source>
</evidence>
<evidence type="ECO:0000250" key="3">
    <source>
        <dbReference type="UniProtKB" id="P70080"/>
    </source>
</evidence>
<evidence type="ECO:0000255" key="4"/>
<evidence type="ECO:0000255" key="5">
    <source>
        <dbReference type="PROSITE-ProRule" id="PRU01007"/>
    </source>
</evidence>
<evidence type="ECO:0000269" key="6">
    <source>
    </source>
</evidence>
<evidence type="ECO:0000305" key="7"/>
<accession>P09810</accession>
<dbReference type="EC" id="1.14.16.4" evidence="6"/>
<dbReference type="EMBL" id="M28000">
    <property type="protein sequence ID" value="AAA42262.1"/>
    <property type="molecule type" value="mRNA"/>
</dbReference>
<dbReference type="EMBL" id="X53501">
    <property type="protein sequence ID" value="CAA37579.1"/>
    <property type="molecule type" value="mRNA"/>
</dbReference>
<dbReference type="PIR" id="JL0034">
    <property type="entry name" value="WHRTW"/>
</dbReference>
<dbReference type="RefSeq" id="NP_001094104.1">
    <property type="nucleotide sequence ID" value="NM_001100634.4"/>
</dbReference>
<dbReference type="RefSeq" id="XP_006229281.1">
    <property type="nucleotide sequence ID" value="XM_006229219.2"/>
</dbReference>
<dbReference type="SMR" id="P09810"/>
<dbReference type="FunCoup" id="P09810">
    <property type="interactions" value="87"/>
</dbReference>
<dbReference type="STRING" id="10116.ENSRNOP00000052959"/>
<dbReference type="BindingDB" id="P09810"/>
<dbReference type="ChEMBL" id="CHEMBL4809"/>
<dbReference type="iPTMnet" id="P09810"/>
<dbReference type="PhosphoSitePlus" id="P09810"/>
<dbReference type="PaxDb" id="10116-ENSRNOP00000052959"/>
<dbReference type="Ensembl" id="ENSRNOT00000056109.4">
    <property type="protein sequence ID" value="ENSRNOP00000052959.2"/>
    <property type="gene ID" value="ENSRNOG00000011672.7"/>
</dbReference>
<dbReference type="GeneID" id="24848"/>
<dbReference type="KEGG" id="rno:24848"/>
<dbReference type="UCSC" id="RGD:3895">
    <property type="organism name" value="rat"/>
</dbReference>
<dbReference type="AGR" id="RGD:3895"/>
<dbReference type="CTD" id="7166"/>
<dbReference type="RGD" id="3895">
    <property type="gene designation" value="Tph1"/>
</dbReference>
<dbReference type="eggNOG" id="KOG3820">
    <property type="taxonomic scope" value="Eukaryota"/>
</dbReference>
<dbReference type="GeneTree" id="ENSGT00950000182885"/>
<dbReference type="HOGENOM" id="CLU_023198_0_0_1"/>
<dbReference type="InParanoid" id="P09810"/>
<dbReference type="OMA" id="DMPWFPR"/>
<dbReference type="OrthoDB" id="983542at2759"/>
<dbReference type="PhylomeDB" id="P09810"/>
<dbReference type="TreeFam" id="TF313327"/>
<dbReference type="Reactome" id="R-RNO-209931">
    <property type="pathway name" value="Serotonin and melatonin biosynthesis"/>
</dbReference>
<dbReference type="SABIO-RK" id="P09810"/>
<dbReference type="UniPathway" id="UPA00846">
    <property type="reaction ID" value="UER00799"/>
</dbReference>
<dbReference type="PRO" id="PR:P09810"/>
<dbReference type="Proteomes" id="UP000002494">
    <property type="component" value="Chromosome 1"/>
</dbReference>
<dbReference type="Bgee" id="ENSRNOG00000011672">
    <property type="expression patterns" value="Expressed in duodenum and 15 other cell types or tissues"/>
</dbReference>
<dbReference type="GO" id="GO:0005737">
    <property type="term" value="C:cytoplasm"/>
    <property type="evidence" value="ECO:0000266"/>
    <property type="project" value="RGD"/>
</dbReference>
<dbReference type="GO" id="GO:0043005">
    <property type="term" value="C:neuron projection"/>
    <property type="evidence" value="ECO:0000318"/>
    <property type="project" value="GO_Central"/>
</dbReference>
<dbReference type="GO" id="GO:0005506">
    <property type="term" value="F:iron ion binding"/>
    <property type="evidence" value="ECO:0007669"/>
    <property type="project" value="InterPro"/>
</dbReference>
<dbReference type="GO" id="GO:0004510">
    <property type="term" value="F:tryptophan 5-monooxygenase activity"/>
    <property type="evidence" value="ECO:0000314"/>
    <property type="project" value="RGD"/>
</dbReference>
<dbReference type="GO" id="GO:0046849">
    <property type="term" value="P:bone remodeling"/>
    <property type="evidence" value="ECO:0000266"/>
    <property type="project" value="RGD"/>
</dbReference>
<dbReference type="GO" id="GO:0007623">
    <property type="term" value="P:circadian rhythm"/>
    <property type="evidence" value="ECO:0000270"/>
    <property type="project" value="RGD"/>
</dbReference>
<dbReference type="GO" id="GO:0060749">
    <property type="term" value="P:mammary gland alveolus development"/>
    <property type="evidence" value="ECO:0000266"/>
    <property type="project" value="RGD"/>
</dbReference>
<dbReference type="GO" id="GO:0030279">
    <property type="term" value="P:negative regulation of ossification"/>
    <property type="evidence" value="ECO:0000315"/>
    <property type="project" value="RGD"/>
</dbReference>
<dbReference type="GO" id="GO:0002576">
    <property type="term" value="P:platelet degranulation"/>
    <property type="evidence" value="ECO:0000250"/>
    <property type="project" value="UniProtKB"/>
</dbReference>
<dbReference type="GO" id="GO:0045600">
    <property type="term" value="P:positive regulation of fat cell differentiation"/>
    <property type="evidence" value="ECO:0000266"/>
    <property type="project" value="RGD"/>
</dbReference>
<dbReference type="GO" id="GO:1900046">
    <property type="term" value="P:regulation of hemostasis"/>
    <property type="evidence" value="ECO:0000250"/>
    <property type="project" value="UniProtKB"/>
</dbReference>
<dbReference type="GO" id="GO:0035902">
    <property type="term" value="P:response to immobilization stress"/>
    <property type="evidence" value="ECO:0000270"/>
    <property type="project" value="RGD"/>
</dbReference>
<dbReference type="GO" id="GO:0042427">
    <property type="term" value="P:serotonin biosynthetic process"/>
    <property type="evidence" value="ECO:0000250"/>
    <property type="project" value="UniProtKB"/>
</dbReference>
<dbReference type="GO" id="GO:0006587">
    <property type="term" value="P:serotonin biosynthetic process from tryptophan"/>
    <property type="evidence" value="ECO:0000304"/>
    <property type="project" value="RGD"/>
</dbReference>
<dbReference type="CDD" id="cd04929">
    <property type="entry name" value="ACT_TPH"/>
    <property type="match status" value="1"/>
</dbReference>
<dbReference type="CDD" id="cd03346">
    <property type="entry name" value="eu_TrpOH"/>
    <property type="match status" value="1"/>
</dbReference>
<dbReference type="FunFam" id="1.10.800.10:FF:000001">
    <property type="entry name" value="tryptophan 5-hydroxylase 1"/>
    <property type="match status" value="1"/>
</dbReference>
<dbReference type="Gene3D" id="1.10.800.10">
    <property type="entry name" value="Aromatic amino acid hydroxylase"/>
    <property type="match status" value="1"/>
</dbReference>
<dbReference type="InterPro" id="IPR045865">
    <property type="entry name" value="ACT-like_dom_sf"/>
</dbReference>
<dbReference type="InterPro" id="IPR002912">
    <property type="entry name" value="ACT_dom"/>
</dbReference>
<dbReference type="InterPro" id="IPR001273">
    <property type="entry name" value="ArAA_hydroxylase"/>
</dbReference>
<dbReference type="InterPro" id="IPR018301">
    <property type="entry name" value="ArAA_hydroxylase_Fe/CU_BS"/>
</dbReference>
<dbReference type="InterPro" id="IPR036951">
    <property type="entry name" value="ArAA_hydroxylase_sf"/>
</dbReference>
<dbReference type="InterPro" id="IPR036329">
    <property type="entry name" value="Aro-AA_hydroxylase_C_sf"/>
</dbReference>
<dbReference type="InterPro" id="IPR019774">
    <property type="entry name" value="Aromatic-AA_hydroxylase_C"/>
</dbReference>
<dbReference type="InterPro" id="IPR005963">
    <property type="entry name" value="Trp_5_mOase"/>
</dbReference>
<dbReference type="InterPro" id="IPR041904">
    <property type="entry name" value="TrpOH_cat"/>
</dbReference>
<dbReference type="InterPro" id="IPR019773">
    <property type="entry name" value="Tyrosine_3-monooxygenase-like"/>
</dbReference>
<dbReference type="NCBIfam" id="TIGR01270">
    <property type="entry name" value="Trp_5_monoox"/>
    <property type="match status" value="1"/>
</dbReference>
<dbReference type="PANTHER" id="PTHR11473">
    <property type="entry name" value="AROMATIC AMINO ACID HYDROXYLASE"/>
    <property type="match status" value="1"/>
</dbReference>
<dbReference type="PANTHER" id="PTHR11473:SF23">
    <property type="entry name" value="TRYPTOPHAN 5-HYDROXYLASE 1"/>
    <property type="match status" value="1"/>
</dbReference>
<dbReference type="Pfam" id="PF01842">
    <property type="entry name" value="ACT"/>
    <property type="match status" value="1"/>
</dbReference>
<dbReference type="Pfam" id="PF00351">
    <property type="entry name" value="Biopterin_H"/>
    <property type="match status" value="1"/>
</dbReference>
<dbReference type="PIRSF" id="PIRSF000336">
    <property type="entry name" value="TH"/>
    <property type="match status" value="1"/>
</dbReference>
<dbReference type="PRINTS" id="PR00372">
    <property type="entry name" value="FYWHYDRXLASE"/>
</dbReference>
<dbReference type="SUPFAM" id="SSF55021">
    <property type="entry name" value="ACT-like"/>
    <property type="match status" value="1"/>
</dbReference>
<dbReference type="SUPFAM" id="SSF56534">
    <property type="entry name" value="Aromatic aminoacid monoxygenases, catalytic and oligomerization domains"/>
    <property type="match status" value="1"/>
</dbReference>
<dbReference type="PROSITE" id="PS51671">
    <property type="entry name" value="ACT"/>
    <property type="match status" value="1"/>
</dbReference>
<dbReference type="PROSITE" id="PS00367">
    <property type="entry name" value="BH4_AAA_HYDROXYL_1"/>
    <property type="match status" value="1"/>
</dbReference>
<dbReference type="PROSITE" id="PS51410">
    <property type="entry name" value="BH4_AAA_HYDROXYL_2"/>
    <property type="match status" value="1"/>
</dbReference>
<keyword id="KW-0408">Iron</keyword>
<keyword id="KW-0479">Metal-binding</keyword>
<keyword id="KW-0503">Monooxygenase</keyword>
<keyword id="KW-0560">Oxidoreductase</keyword>
<keyword id="KW-0597">Phosphoprotein</keyword>
<keyword id="KW-1185">Reference proteome</keyword>
<keyword id="KW-0724">Serotonin biosynthesis</keyword>
<keyword id="KW-0832">Ubl conjugation</keyword>
<name>TPH1_RAT</name>
<proteinExistence type="evidence at protein level"/>